<sequence>MAGIPGLLFLLFLLLCAVGQVSPYSAPWKPTWPAYRLPVVLPQSTLSLAKPDFGAEAKLEVSSSCGPQCHKGTPLPTYEEAKQYLSYETLYANGSRTETQVGIYILSSSGGGAQHRDSGSSGKSRRKRQIYGYDSRFSIFGKDFLLNYPFSTSVKLSTGCTGTLVAEKHVLTAAHCIHDGKTYVKGTQKLRVGFLKPKFKDGGRGANDSTSAMPEKMKFQWIRVKRTHVPKGWIKGNANDIGMDYDYALLELKKPHKRKFMKIGVSPPAKQLPGGRIHFSGYDNDRPGNLVYRFCDVKDETYDLLYQQCDAQPGASGSGVYVRMWKRQQQKWERKIIGIFSGHQWVDMNGSPQDFNVAVRITPLKYAQICYWIKGNYLDCREG</sequence>
<name>PRS23_MACMU</name>
<gene>
    <name type="primary">PRSS23</name>
</gene>
<feature type="signal peptide" evidence="3">
    <location>
        <begin position="1"/>
        <end position="19"/>
    </location>
</feature>
<feature type="chain" id="PRO_0000299362" description="Serine protease 23">
    <location>
        <begin position="20"/>
        <end position="383"/>
    </location>
</feature>
<feature type="region of interest" description="Disordered" evidence="5">
    <location>
        <begin position="108"/>
        <end position="127"/>
    </location>
</feature>
<feature type="active site" description="Charge relay system" evidence="4">
    <location>
        <position position="175"/>
    </location>
</feature>
<feature type="active site" description="Charge relay system" evidence="4">
    <location>
        <position position="240"/>
    </location>
</feature>
<feature type="active site" description="Charge relay system" evidence="4">
    <location>
        <position position="316"/>
    </location>
</feature>
<feature type="modified residue" description="Phosphoserine; by FAM20C" evidence="2">
    <location>
        <position position="109"/>
    </location>
</feature>
<feature type="glycosylation site" description="N-linked (GlcNAc...) asparagine" evidence="3">
    <location>
        <position position="93"/>
    </location>
</feature>
<feature type="glycosylation site" description="N-linked (GlcNAc...) asparagine" evidence="3">
    <location>
        <position position="207"/>
    </location>
</feature>
<feature type="disulfide bond" evidence="1">
    <location>
        <begin position="160"/>
        <end position="176"/>
    </location>
</feature>
<comment type="subcellular location">
    <subcellularLocation>
        <location evidence="6">Secreted</location>
    </subcellularLocation>
</comment>
<comment type="similarity">
    <text evidence="6">Belongs to the peptidase S1 family.</text>
</comment>
<protein>
    <recommendedName>
        <fullName>Serine protease 23</fullName>
        <ecNumber>3.4.21.-</ecNumber>
    </recommendedName>
</protein>
<organism>
    <name type="scientific">Macaca mulatta</name>
    <name type="common">Rhesus macaque</name>
    <dbReference type="NCBI Taxonomy" id="9544"/>
    <lineage>
        <taxon>Eukaryota</taxon>
        <taxon>Metazoa</taxon>
        <taxon>Chordata</taxon>
        <taxon>Craniata</taxon>
        <taxon>Vertebrata</taxon>
        <taxon>Euteleostomi</taxon>
        <taxon>Mammalia</taxon>
        <taxon>Eutheria</taxon>
        <taxon>Euarchontoglires</taxon>
        <taxon>Primates</taxon>
        <taxon>Haplorrhini</taxon>
        <taxon>Catarrhini</taxon>
        <taxon>Cercopithecidae</taxon>
        <taxon>Cercopithecinae</taxon>
        <taxon>Macaca</taxon>
    </lineage>
</organism>
<accession>Q1WK23</accession>
<keyword id="KW-1015">Disulfide bond</keyword>
<keyword id="KW-0325">Glycoprotein</keyword>
<keyword id="KW-0378">Hydrolase</keyword>
<keyword id="KW-0597">Phosphoprotein</keyword>
<keyword id="KW-0645">Protease</keyword>
<keyword id="KW-1185">Reference proteome</keyword>
<keyword id="KW-0964">Secreted</keyword>
<keyword id="KW-0720">Serine protease</keyword>
<keyword id="KW-0732">Signal</keyword>
<reference key="1">
    <citation type="journal article" date="2006" name="Biol. Reprod.">
        <title>The identification of novel ovarian proteases through the use of genomic and bioinformatic methodologies.</title>
        <authorList>
            <person name="Miyakoshi K."/>
            <person name="Murphy M.J."/>
            <person name="Yeoman R.R."/>
            <person name="Mitra S."/>
            <person name="Dubay C.J."/>
            <person name="Hennebold J.D."/>
        </authorList>
    </citation>
    <scope>NUCLEOTIDE SEQUENCE [MRNA]</scope>
    <source>
        <tissue>Ovary</tissue>
    </source>
</reference>
<proteinExistence type="evidence at transcript level"/>
<dbReference type="EC" id="3.4.21.-"/>
<dbReference type="EMBL" id="DQ223039">
    <property type="protein sequence ID" value="ABB46199.1"/>
    <property type="molecule type" value="mRNA"/>
</dbReference>
<dbReference type="RefSeq" id="NP_001038202.1">
    <property type="nucleotide sequence ID" value="NM_001044737.1"/>
</dbReference>
<dbReference type="RefSeq" id="XP_014970783.1">
    <property type="nucleotide sequence ID" value="XM_015115297.1"/>
</dbReference>
<dbReference type="FunCoup" id="Q1WK23">
    <property type="interactions" value="1131"/>
</dbReference>
<dbReference type="STRING" id="9544.ENSMMUP00000047995"/>
<dbReference type="GlyCosmos" id="Q1WK23">
    <property type="glycosylation" value="2 sites, No reported glycans"/>
</dbReference>
<dbReference type="PaxDb" id="9544-ENSMMUP00000004958"/>
<dbReference type="GeneID" id="704537"/>
<dbReference type="KEGG" id="mcc:704537"/>
<dbReference type="CTD" id="11098"/>
<dbReference type="eggNOG" id="ENOG502QTW6">
    <property type="taxonomic scope" value="Eukaryota"/>
</dbReference>
<dbReference type="HOGENOM" id="CLU_055829_0_0_1"/>
<dbReference type="InParanoid" id="Q1WK23"/>
<dbReference type="OrthoDB" id="10037376at2759"/>
<dbReference type="TreeFam" id="TF329011"/>
<dbReference type="Proteomes" id="UP000006718">
    <property type="component" value="Unassembled WGS sequence"/>
</dbReference>
<dbReference type="GO" id="GO:0005576">
    <property type="term" value="C:extracellular region"/>
    <property type="evidence" value="ECO:0007669"/>
    <property type="project" value="UniProtKB-SubCell"/>
</dbReference>
<dbReference type="GO" id="GO:0004252">
    <property type="term" value="F:serine-type endopeptidase activity"/>
    <property type="evidence" value="ECO:0007669"/>
    <property type="project" value="InterPro"/>
</dbReference>
<dbReference type="GO" id="GO:0006508">
    <property type="term" value="P:proteolysis"/>
    <property type="evidence" value="ECO:0007669"/>
    <property type="project" value="UniProtKB-KW"/>
</dbReference>
<dbReference type="FunFam" id="2.40.10.10:FF:000040">
    <property type="entry name" value="Serine protease 23"/>
    <property type="match status" value="1"/>
</dbReference>
<dbReference type="FunFam" id="2.40.10.10:FF:000048">
    <property type="entry name" value="serine protease 23"/>
    <property type="match status" value="1"/>
</dbReference>
<dbReference type="Gene3D" id="2.40.10.10">
    <property type="entry name" value="Trypsin-like serine proteases"/>
    <property type="match status" value="2"/>
</dbReference>
<dbReference type="InterPro" id="IPR050966">
    <property type="entry name" value="Glutamyl_endopeptidase"/>
</dbReference>
<dbReference type="InterPro" id="IPR009003">
    <property type="entry name" value="Peptidase_S1_PA"/>
</dbReference>
<dbReference type="InterPro" id="IPR043504">
    <property type="entry name" value="Peptidase_S1_PA_chymotrypsin"/>
</dbReference>
<dbReference type="InterPro" id="IPR001254">
    <property type="entry name" value="Trypsin_dom"/>
</dbReference>
<dbReference type="InterPro" id="IPR018114">
    <property type="entry name" value="TRYPSIN_HIS"/>
</dbReference>
<dbReference type="PANTHER" id="PTHR15462">
    <property type="entry name" value="SERINE PROTEASE"/>
    <property type="match status" value="1"/>
</dbReference>
<dbReference type="PANTHER" id="PTHR15462:SF10">
    <property type="entry name" value="SERINE PROTEASE 23"/>
    <property type="match status" value="1"/>
</dbReference>
<dbReference type="Pfam" id="PF00089">
    <property type="entry name" value="Trypsin"/>
    <property type="match status" value="1"/>
</dbReference>
<dbReference type="SUPFAM" id="SSF50494">
    <property type="entry name" value="Trypsin-like serine proteases"/>
    <property type="match status" value="1"/>
</dbReference>
<dbReference type="PROSITE" id="PS00134">
    <property type="entry name" value="TRYPSIN_HIS"/>
    <property type="match status" value="1"/>
</dbReference>
<evidence type="ECO:0000250" key="1"/>
<evidence type="ECO:0000250" key="2">
    <source>
        <dbReference type="UniProtKB" id="O95084"/>
    </source>
</evidence>
<evidence type="ECO:0000255" key="3"/>
<evidence type="ECO:0000255" key="4">
    <source>
        <dbReference type="PROSITE-ProRule" id="PRU10078"/>
    </source>
</evidence>
<evidence type="ECO:0000256" key="5">
    <source>
        <dbReference type="SAM" id="MobiDB-lite"/>
    </source>
</evidence>
<evidence type="ECO:0000305" key="6"/>